<sequence>MTRTEILSNGHAEPASNGMVQYPFDNVVDALRAAANTTEGIIAYQTNNSGSETTPAQHISYKELLRTAEANAALLQSKHLTTPKQPVVVHSDNAVDSMIWYWSVLLTGAIPTMTGPGMFSQDAVERKKHLLHLHRTLDAPLCLTRRALMGPFNENAGLLQCLAFEDLSPSPDGSNASLPPSINPSPMDVAALMLTSGSSGTAKAVPITHQQVLAALRGKTAVAQLSHPTSPFLSWVHMDHVANLVHCHLFAIVAGVSQVQVPAANVLVDPMQLLNLLSRHRVSRTFAPNFLFAKLRRQFDAGRTDSLDADLNLAALYLDTGGEANVIDVCAGLQPILARYGAPADVFKPSFGMTETCAGCIFNSHCPSYDQARLHEFASLGTPMPGVRMRISRLDGSGEAAPGERGHLEITGEAIFHGYYNNPTATADAFTADGWFRTGDLAYIDAGGHLHLDGRTKEMVNINGVKYLPHELDAALEQAEIPGATPTYFCCFGTRTAAMDTEVVAVLYLPAYDEADDAARFDAQSSIIRLISMYTHSRPRVVPLRREDMPKTTLGKLSRAKLQAALEAGQFAAYEAANEAAIRRHRDTMRGEPASAEEATILSIIREQLEIPEADDFGVTDSILSMGATSMDLVAIMQRVNRQLQLRKTLALTDMLNYATARGLCQRIAATSGTGRKHVYDPVVVLQPHGRKTPLWLVHPGVGEVLVFVNLAHHITDRPVYAFRAKGFNAAEGETPFTSLEEVFETYKAAMKARQPQGPYAIAGYSFGGMVAFEIAKRLEAEGDEVRYCGSWNLPPHIKWRMKQLLWDECIIHLFYFVDLMDEETAYTHKPKLCELERQGRRLEAVRYLRQHSNPARWDELGLSEEYYLLWVNLASNMQGMATEYEPSGNVKHLDVFVADPLTHVARTREEWVNGLLAAWKDFVREGVRYHHVEGAHYTMLKPEYVANFAKTLRTVLRERGV</sequence>
<name>ATQA_ASPTN</name>
<comment type="function">
    <text evidence="1 4">Nonribosomal peptide synthetase; part of the gene cluster that mediates the biosynthesis of asterriquinone CT5, a natural product that displays potential biological activities including antitumor and insulin mimic activities (PubMed:23841722). The nonribosomal peptide synthetase atqA is responsible for the production of the benzoquinone derivative didemethylasterriquinone D (DDAQ D), via condensation of 2 indole pyruvic acid (IPA) molecules (PubMed:23841722). The symmetric connectivity of the 2 IPA molecules is thought to arise by head-to-tail dual Claisen condensations catalyzed by the TE domain of atqA (By similarity). DDAQ D represents the core structure of asterriquinones and is further modified by yet unidentified tailoring enzymes to lead to the production of asterriquinone CT5 (PubMed:23841722).</text>
</comment>
<comment type="pathway">
    <text evidence="4">Secondary metabolite biosynthesis.</text>
</comment>
<comment type="domain">
    <text evidence="7">AtqA has an A-T-TE domain architecture (Probable). The adenylation (A) domain recognizes and activates the aryl acid substrates, and loads them onto the thiolation (T) domain (Probable). The thioesterase (TE) domain shares the missing condensation (C) domain function, and is responsible for condensation and final product release (Probable).</text>
</comment>
<comment type="disruption phenotype">
    <text evidence="4">Abbolishes the production of asterriquinone CT5.</text>
</comment>
<comment type="similarity">
    <text evidence="6">Belongs to the NRP synthetase family.</text>
</comment>
<evidence type="ECO:0000250" key="1">
    <source>
        <dbReference type="UniProtKB" id="A7XRY0"/>
    </source>
</evidence>
<evidence type="ECO:0000255" key="2"/>
<evidence type="ECO:0000255" key="3">
    <source>
        <dbReference type="PROSITE-ProRule" id="PRU00258"/>
    </source>
</evidence>
<evidence type="ECO:0000269" key="4">
    <source>
    </source>
</evidence>
<evidence type="ECO:0000303" key="5">
    <source>
    </source>
</evidence>
<evidence type="ECO:0000305" key="6"/>
<evidence type="ECO:0000305" key="7">
    <source>
    </source>
</evidence>
<keyword id="KW-0596">Phosphopantetheine</keyword>
<keyword id="KW-0597">Phosphoprotein</keyword>
<keyword id="KW-1185">Reference proteome</keyword>
<keyword id="KW-0808">Transferase</keyword>
<proteinExistence type="inferred from homology"/>
<feature type="chain" id="PRO_0000450545" description="Nonribosomal peptide synthetase atqA">
    <location>
        <begin position="1"/>
        <end position="962"/>
    </location>
</feature>
<feature type="domain" description="Carrier" evidence="3 7">
    <location>
        <begin position="595"/>
        <end position="672"/>
    </location>
</feature>
<feature type="region of interest" description="Adenylation (A) domain" evidence="2 7">
    <location>
        <begin position="34"/>
        <end position="462"/>
    </location>
</feature>
<feature type="region of interest" description="Thioesterase (TE) domain" evidence="2 7">
    <location>
        <begin position="694"/>
        <end position="951"/>
    </location>
</feature>
<feature type="modified residue" description="O-(pantetheine 4'-phosphoryl)serine" evidence="3">
    <location>
        <position position="630"/>
    </location>
</feature>
<protein>
    <recommendedName>
        <fullName evidence="5">Nonribosomal peptide synthetase atqA</fullName>
        <ecNumber evidence="7">2.3.1.-</ecNumber>
    </recommendedName>
    <alternativeName>
        <fullName evidence="5">Didemethylasterriquinone synthetase</fullName>
    </alternativeName>
</protein>
<dbReference type="EC" id="2.3.1.-" evidence="7"/>
<dbReference type="EMBL" id="CH476594">
    <property type="protein sequence ID" value="EAU39346.1"/>
    <property type="molecule type" value="Genomic_DNA"/>
</dbReference>
<dbReference type="RefSeq" id="XP_001210786.1">
    <property type="nucleotide sequence ID" value="XM_001210786.1"/>
</dbReference>
<dbReference type="SMR" id="Q0D034"/>
<dbReference type="STRING" id="341663.Q0D034"/>
<dbReference type="ESTHER" id="asptn-atqa">
    <property type="family name" value="Thioesterase"/>
</dbReference>
<dbReference type="EnsemblFungi" id="EAU39346">
    <property type="protein sequence ID" value="EAU39346"/>
    <property type="gene ID" value="ATEG_00700"/>
</dbReference>
<dbReference type="GeneID" id="4355455"/>
<dbReference type="VEuPathDB" id="FungiDB:ATEG_00700"/>
<dbReference type="eggNOG" id="KOG1176">
    <property type="taxonomic scope" value="Eukaryota"/>
</dbReference>
<dbReference type="eggNOG" id="KOG1202">
    <property type="taxonomic scope" value="Eukaryota"/>
</dbReference>
<dbReference type="HOGENOM" id="CLU_000022_23_6_1"/>
<dbReference type="OrthoDB" id="10253869at2759"/>
<dbReference type="Proteomes" id="UP000007963">
    <property type="component" value="Unassembled WGS sequence"/>
</dbReference>
<dbReference type="GO" id="GO:0016405">
    <property type="term" value="F:CoA-ligase activity"/>
    <property type="evidence" value="ECO:0007669"/>
    <property type="project" value="TreeGrafter"/>
</dbReference>
<dbReference type="GO" id="GO:0016740">
    <property type="term" value="F:transferase activity"/>
    <property type="evidence" value="ECO:0007669"/>
    <property type="project" value="UniProtKB-KW"/>
</dbReference>
<dbReference type="GO" id="GO:0009058">
    <property type="term" value="P:biosynthetic process"/>
    <property type="evidence" value="ECO:0007669"/>
    <property type="project" value="InterPro"/>
</dbReference>
<dbReference type="FunFam" id="3.40.50.1820:FF:000439">
    <property type="entry name" value="Non-ribosomal peptide synthetase OfaC"/>
    <property type="match status" value="1"/>
</dbReference>
<dbReference type="Gene3D" id="3.30.300.30">
    <property type="match status" value="1"/>
</dbReference>
<dbReference type="Gene3D" id="1.10.1200.10">
    <property type="entry name" value="ACP-like"/>
    <property type="match status" value="1"/>
</dbReference>
<dbReference type="Gene3D" id="3.40.50.1820">
    <property type="entry name" value="alpha/beta hydrolase"/>
    <property type="match status" value="1"/>
</dbReference>
<dbReference type="Gene3D" id="3.40.50.12780">
    <property type="entry name" value="N-terminal domain of ligase-like"/>
    <property type="match status" value="1"/>
</dbReference>
<dbReference type="InterPro" id="IPR029058">
    <property type="entry name" value="AB_hydrolase_fold"/>
</dbReference>
<dbReference type="InterPro" id="IPR036736">
    <property type="entry name" value="ACP-like_sf"/>
</dbReference>
<dbReference type="InterPro" id="IPR045851">
    <property type="entry name" value="AMP-bd_C_sf"/>
</dbReference>
<dbReference type="InterPro" id="IPR020845">
    <property type="entry name" value="AMP-binding_CS"/>
</dbReference>
<dbReference type="InterPro" id="IPR000873">
    <property type="entry name" value="AMP-dep_synth/lig_dom"/>
</dbReference>
<dbReference type="InterPro" id="IPR042099">
    <property type="entry name" value="ANL_N_sf"/>
</dbReference>
<dbReference type="InterPro" id="IPR009081">
    <property type="entry name" value="PP-bd_ACP"/>
</dbReference>
<dbReference type="InterPro" id="IPR001031">
    <property type="entry name" value="Thioesterase"/>
</dbReference>
<dbReference type="PANTHER" id="PTHR24096:SF422">
    <property type="entry name" value="BCDNA.GH02901"/>
    <property type="match status" value="1"/>
</dbReference>
<dbReference type="PANTHER" id="PTHR24096">
    <property type="entry name" value="LONG-CHAIN-FATTY-ACID--COA LIGASE"/>
    <property type="match status" value="1"/>
</dbReference>
<dbReference type="Pfam" id="PF00501">
    <property type="entry name" value="AMP-binding"/>
    <property type="match status" value="1"/>
</dbReference>
<dbReference type="Pfam" id="PF00550">
    <property type="entry name" value="PP-binding"/>
    <property type="match status" value="1"/>
</dbReference>
<dbReference type="Pfam" id="PF00975">
    <property type="entry name" value="Thioesterase"/>
    <property type="match status" value="1"/>
</dbReference>
<dbReference type="SUPFAM" id="SSF56801">
    <property type="entry name" value="Acetyl-CoA synthetase-like"/>
    <property type="match status" value="1"/>
</dbReference>
<dbReference type="SUPFAM" id="SSF47336">
    <property type="entry name" value="ACP-like"/>
    <property type="match status" value="1"/>
</dbReference>
<dbReference type="SUPFAM" id="SSF53474">
    <property type="entry name" value="alpha/beta-Hydrolases"/>
    <property type="match status" value="1"/>
</dbReference>
<dbReference type="PROSITE" id="PS00455">
    <property type="entry name" value="AMP_BINDING"/>
    <property type="match status" value="1"/>
</dbReference>
<dbReference type="PROSITE" id="PS50075">
    <property type="entry name" value="CARRIER"/>
    <property type="match status" value="1"/>
</dbReference>
<gene>
    <name evidence="5" type="primary">atqA</name>
    <name type="ORF">ATEG_00700</name>
</gene>
<accession>Q0D034</accession>
<reference key="1">
    <citation type="submission" date="2005-09" db="EMBL/GenBank/DDBJ databases">
        <title>Annotation of the Aspergillus terreus NIH2624 genome.</title>
        <authorList>
            <person name="Birren B.W."/>
            <person name="Lander E.S."/>
            <person name="Galagan J.E."/>
            <person name="Nusbaum C."/>
            <person name="Devon K."/>
            <person name="Henn M."/>
            <person name="Ma L.-J."/>
            <person name="Jaffe D.B."/>
            <person name="Butler J."/>
            <person name="Alvarez P."/>
            <person name="Gnerre S."/>
            <person name="Grabherr M."/>
            <person name="Kleber M."/>
            <person name="Mauceli E.W."/>
            <person name="Brockman W."/>
            <person name="Rounsley S."/>
            <person name="Young S.K."/>
            <person name="LaButti K."/>
            <person name="Pushparaj V."/>
            <person name="DeCaprio D."/>
            <person name="Crawford M."/>
            <person name="Koehrsen M."/>
            <person name="Engels R."/>
            <person name="Montgomery P."/>
            <person name="Pearson M."/>
            <person name="Howarth C."/>
            <person name="Larson L."/>
            <person name="Luoma S."/>
            <person name="White J."/>
            <person name="Alvarado L."/>
            <person name="Kodira C.D."/>
            <person name="Zeng Q."/>
            <person name="Oleary S."/>
            <person name="Yandava C."/>
            <person name="Denning D.W."/>
            <person name="Nierman W.C."/>
            <person name="Milne T."/>
            <person name="Madden K."/>
        </authorList>
    </citation>
    <scope>NUCLEOTIDE SEQUENCE [LARGE SCALE GENOMIC DNA]</scope>
    <source>
        <strain>NIH 2624 / FGSC A1156</strain>
    </source>
</reference>
<reference key="2">
    <citation type="journal article" date="2013" name="Org. Lett.">
        <title>Application of an efficient gene targeting system linking secondary metabolites to their biosynthetic genes in Aspergillus terreus.</title>
        <authorList>
            <person name="Guo C.J."/>
            <person name="Knox B.P."/>
            <person name="Sanchez J.F."/>
            <person name="Chiang Y.M."/>
            <person name="Bruno K.S."/>
            <person name="Wang C.C."/>
        </authorList>
    </citation>
    <scope>FUNCTION</scope>
    <scope>DOMAIN</scope>
    <scope>DISRUPTION PHENOTYPE</scope>
    <scope>PATHWAY</scope>
</reference>
<organism>
    <name type="scientific">Aspergillus terreus (strain NIH 2624 / FGSC A1156)</name>
    <dbReference type="NCBI Taxonomy" id="341663"/>
    <lineage>
        <taxon>Eukaryota</taxon>
        <taxon>Fungi</taxon>
        <taxon>Dikarya</taxon>
        <taxon>Ascomycota</taxon>
        <taxon>Pezizomycotina</taxon>
        <taxon>Eurotiomycetes</taxon>
        <taxon>Eurotiomycetidae</taxon>
        <taxon>Eurotiales</taxon>
        <taxon>Aspergillaceae</taxon>
        <taxon>Aspergillus</taxon>
        <taxon>Aspergillus subgen. Circumdati</taxon>
    </lineage>
</organism>